<sequence>TNIPQTMQDLDLQEVAGKWHSVAMAASDISLLDSEEAPLRVYIEKLRPTPEDNLEIILREGENKGCAEKKIFAEKTESPAEFKINYLDEDTVFALDSDYKNYLFLCMKNAATPGQSLVCQYLARTQMVDEEIMEKFRRALQPLPGRVQIVPDLTRMAERCRI</sequence>
<feature type="chain" id="PRO_0000201015" description="Beta-lactoglobulin-1">
    <location>
        <begin position="1"/>
        <end position="162"/>
    </location>
</feature>
<feature type="disulfide bond">
    <location>
        <begin position="66"/>
        <end position="160"/>
    </location>
</feature>
<feature type="disulfide bond">
    <location>
        <begin position="106"/>
        <end position="119"/>
    </location>
</feature>
<keyword id="KW-0903">Direct protein sequencing</keyword>
<keyword id="KW-1015">Disulfide bond</keyword>
<keyword id="KW-0494">Milk protein</keyword>
<keyword id="KW-1185">Reference proteome</keyword>
<keyword id="KW-0683">Retinol-binding</keyword>
<keyword id="KW-0964">Secreted</keyword>
<keyword id="KW-0813">Transport</keyword>
<accession>P13613</accession>
<name>LACB1_EQUAS</name>
<organism>
    <name type="scientific">Equus asinus</name>
    <name type="common">Donkey</name>
    <name type="synonym">Equus africanus asinus</name>
    <dbReference type="NCBI Taxonomy" id="9793"/>
    <lineage>
        <taxon>Eukaryota</taxon>
        <taxon>Metazoa</taxon>
        <taxon>Chordata</taxon>
        <taxon>Craniata</taxon>
        <taxon>Vertebrata</taxon>
        <taxon>Euteleostomi</taxon>
        <taxon>Mammalia</taxon>
        <taxon>Eutheria</taxon>
        <taxon>Laurasiatheria</taxon>
        <taxon>Perissodactyla</taxon>
        <taxon>Equidae</taxon>
        <taxon>Equus</taxon>
    </lineage>
</organism>
<gene>
    <name type="primary">LGB1</name>
</gene>
<comment type="function">
    <text>Primary component of whey, it binds retinol and is probably involved in the transport of that molecule.</text>
</comment>
<comment type="subunit">
    <text>Monomer.</text>
</comment>
<comment type="subcellular location">
    <subcellularLocation>
        <location>Secreted</location>
    </subcellularLocation>
</comment>
<comment type="tissue specificity">
    <text>Synthesized in mammary gland and secreted in milk.</text>
</comment>
<comment type="similarity">
    <text evidence="1">Belongs to the calycin superfamily. Lipocalin family.</text>
</comment>
<protein>
    <recommendedName>
        <fullName>Beta-lactoglobulin-1</fullName>
        <shortName>Beta-LG-1</shortName>
    </recommendedName>
    <alternativeName>
        <fullName>Beta-lactoglobulin I, major monomeric</fullName>
    </alternativeName>
</protein>
<evidence type="ECO:0000305" key="1"/>
<proteinExistence type="evidence at protein level"/>
<reference key="1">
    <citation type="journal article" date="1988" name="Biol. Chem. Hoppe-Seyler">
        <title>Microanalysis of the amino-acid sequence of monomeric beta-lactoglobulin I from donkey (Equus asinus) milk. The primary structure and its homology with a superfamily of hydrophobic molecule transporters.</title>
        <authorList>
            <person name="Godovac-Zimmermann J."/>
            <person name="Conti A."/>
            <person name="James L."/>
            <person name="Napolitano L."/>
        </authorList>
    </citation>
    <scope>PROTEIN SEQUENCE</scope>
    <source>
        <tissue>Milk</tissue>
    </source>
</reference>
<dbReference type="PIR" id="S00372">
    <property type="entry name" value="LGHOD"/>
</dbReference>
<dbReference type="SMR" id="P13613"/>
<dbReference type="Proteomes" id="UP000694387">
    <property type="component" value="Unplaced"/>
</dbReference>
<dbReference type="GO" id="GO:0005576">
    <property type="term" value="C:extracellular region"/>
    <property type="evidence" value="ECO:0007669"/>
    <property type="project" value="UniProtKB-SubCell"/>
</dbReference>
<dbReference type="GO" id="GO:0019841">
    <property type="term" value="F:retinol binding"/>
    <property type="evidence" value="ECO:0007669"/>
    <property type="project" value="UniProtKB-KW"/>
</dbReference>
<dbReference type="CDD" id="cd19416">
    <property type="entry name" value="lipocalin_beta-LG-like"/>
    <property type="match status" value="1"/>
</dbReference>
<dbReference type="Gene3D" id="2.40.128.20">
    <property type="match status" value="1"/>
</dbReference>
<dbReference type="InterPro" id="IPR002447">
    <property type="entry name" value="Blactoglobulin"/>
</dbReference>
<dbReference type="InterPro" id="IPR012674">
    <property type="entry name" value="Calycin"/>
</dbReference>
<dbReference type="InterPro" id="IPR002345">
    <property type="entry name" value="Lipocalin"/>
</dbReference>
<dbReference type="InterPro" id="IPR022272">
    <property type="entry name" value="Lipocalin_CS"/>
</dbReference>
<dbReference type="InterPro" id="IPR000566">
    <property type="entry name" value="Lipocln_cytosolic_FA-bd_dom"/>
</dbReference>
<dbReference type="PANTHER" id="PTHR11430:SF117">
    <property type="entry name" value="GLYCODELIN"/>
    <property type="match status" value="1"/>
</dbReference>
<dbReference type="PANTHER" id="PTHR11430">
    <property type="entry name" value="LIPOCALIN"/>
    <property type="match status" value="1"/>
</dbReference>
<dbReference type="Pfam" id="PF00061">
    <property type="entry name" value="Lipocalin"/>
    <property type="match status" value="1"/>
</dbReference>
<dbReference type="PRINTS" id="PR01172">
    <property type="entry name" value="BLCTOGLOBULN"/>
</dbReference>
<dbReference type="PRINTS" id="PR00179">
    <property type="entry name" value="LIPOCALIN"/>
</dbReference>
<dbReference type="SUPFAM" id="SSF50814">
    <property type="entry name" value="Lipocalins"/>
    <property type="match status" value="1"/>
</dbReference>
<dbReference type="PROSITE" id="PS00213">
    <property type="entry name" value="LIPOCALIN"/>
    <property type="match status" value="1"/>
</dbReference>